<accession>P69831</accession>
<accession>P37189</accession>
<accession>P76411</accession>
<feature type="chain" id="PRO_0000186570" description="PTS system galactitol-specific EIIC component">
    <location>
        <begin position="1"/>
        <end position="451"/>
    </location>
</feature>
<feature type="transmembrane region" description="Helical" evidence="1">
    <location>
        <begin position="9"/>
        <end position="29"/>
    </location>
</feature>
<feature type="transmembrane region" description="Helical" evidence="1">
    <location>
        <begin position="41"/>
        <end position="61"/>
    </location>
</feature>
<feature type="transmembrane region" description="Helical" evidence="1">
    <location>
        <begin position="92"/>
        <end position="112"/>
    </location>
</feature>
<feature type="transmembrane region" description="Helical" evidence="1">
    <location>
        <begin position="138"/>
        <end position="158"/>
    </location>
</feature>
<feature type="transmembrane region" description="Helical" evidence="1">
    <location>
        <begin position="218"/>
        <end position="238"/>
    </location>
</feature>
<feature type="transmembrane region" description="Helical" evidence="1">
    <location>
        <begin position="305"/>
        <end position="325"/>
    </location>
</feature>
<feature type="transmembrane region" description="Helical" evidence="1">
    <location>
        <begin position="329"/>
        <end position="349"/>
    </location>
</feature>
<feature type="transmembrane region" description="Helical" evidence="1">
    <location>
        <begin position="357"/>
        <end position="377"/>
    </location>
</feature>
<feature type="transmembrane region" description="Helical" evidence="1">
    <location>
        <begin position="392"/>
        <end position="412"/>
    </location>
</feature>
<feature type="transmembrane region" description="Helical" evidence="1">
    <location>
        <begin position="415"/>
        <end position="435"/>
    </location>
</feature>
<feature type="domain" description="PTS EIIC type-2" evidence="1">
    <location>
        <begin position="6"/>
        <end position="435"/>
    </location>
</feature>
<feature type="modified residue" description="N-formylmethionine" evidence="4">
    <location>
        <position position="1"/>
    </location>
</feature>
<feature type="sequence conflict" description="In Ref. 1; CAA56230." evidence="7" ref="1">
    <original>MGPIAVLVDAIIEKIPG</original>
    <variation>LGPNCGAGGCYHRENPS</variation>
    <location>
        <begin position="187"/>
        <end position="203"/>
    </location>
</feature>
<feature type="sequence conflict" description="In Ref. 1; CAA56230." evidence="7" ref="1">
    <original>QGGSPITWLLIQVFSPQNIPGFIIIGAIYLTGIFMTWRRARGFIKQEKVVLAE</original>
    <variation>TGRFSHYLVTDSGFSPQIFPVSLLSAQFI</variation>
    <location>
        <begin position="399"/>
        <end position="451"/>
    </location>
</feature>
<keyword id="KW-0997">Cell inner membrane</keyword>
<keyword id="KW-1003">Cell membrane</keyword>
<keyword id="KW-0291">Formylation</keyword>
<keyword id="KW-0298">Galactitol metabolism</keyword>
<keyword id="KW-0472">Membrane</keyword>
<keyword id="KW-0598">Phosphotransferase system</keyword>
<keyword id="KW-1185">Reference proteome</keyword>
<keyword id="KW-0762">Sugar transport</keyword>
<keyword id="KW-0812">Transmembrane</keyword>
<keyword id="KW-1133">Transmembrane helix</keyword>
<keyword id="KW-0813">Transport</keyword>
<comment type="function">
    <text evidence="5">The phosphoenolpyruvate-dependent sugar phosphotransferase system (PTS), a major carbohydrate active transport system, catalyzes the phosphorylation of incoming sugar substrates concomitant with their translocation across the cell membrane. The enzyme II complex composed of GatA, GatB and GatC is involved in galactitol transport.</text>
</comment>
<comment type="subunit">
    <text evidence="3">Forms a complex with one each of subunit of GatA, GatB and 2 subunits of GatC.</text>
</comment>
<comment type="subcellular location">
    <subcellularLocation>
        <location evidence="1 2 3">Cell inner membrane</location>
        <topology evidence="1 2 3">Multi-pass membrane protein</topology>
    </subcellularLocation>
</comment>
<comment type="induction">
    <text evidence="5">Constitutively expressed.</text>
</comment>
<comment type="domain">
    <text evidence="1">The EIIC domain forms the PTS system translocation channel and contains the specific substrate-binding site.</text>
</comment>
<comment type="PTM">
    <text evidence="4">84% of isolated protein was N-formylated.</text>
</comment>
<comment type="caution">
    <text evidence="8">A pseudogene in strain MG1655 / ATCC 700926 due to a recent laboratory-derived single nucleotide insertion, but not its parent MG1655 / ATCC 47076.</text>
</comment>
<gene>
    <name type="primary">gatC</name>
    <name type="ordered locus">b2092</name>
    <name type="ordered locus">JW2076</name>
</gene>
<dbReference type="EMBL" id="X79837">
    <property type="protein sequence ID" value="CAA56230.1"/>
    <property type="molecule type" value="Genomic_DNA"/>
</dbReference>
<dbReference type="EMBL" id="U00096">
    <property type="status" value="NOT_ANNOTATED_CDS"/>
    <property type="molecule type" value="Genomic_DNA"/>
</dbReference>
<dbReference type="EMBL" id="AP009048">
    <property type="protein sequence ID" value="BAA15955.1"/>
    <property type="molecule type" value="Genomic_DNA"/>
</dbReference>
<dbReference type="PIR" id="C64976">
    <property type="entry name" value="C64976"/>
</dbReference>
<dbReference type="PIR" id="S55905">
    <property type="entry name" value="S55905"/>
</dbReference>
<dbReference type="RefSeq" id="WP_000490679.1">
    <property type="nucleotide sequence ID" value="NZ_STEB01000002.1"/>
</dbReference>
<dbReference type="BioGRID" id="4260430">
    <property type="interactions" value="14"/>
</dbReference>
<dbReference type="ComplexPortal" id="CPX-5942">
    <property type="entry name" value="Galactitol-specific enzyme II complex"/>
</dbReference>
<dbReference type="FunCoup" id="P69831">
    <property type="interactions" value="21"/>
</dbReference>
<dbReference type="TCDB" id="4.A.5.1.1">
    <property type="family name" value="the pts galactitol (gat) family"/>
</dbReference>
<dbReference type="jPOST" id="P69831"/>
<dbReference type="KEGG" id="ecj:JW2076"/>
<dbReference type="KEGG" id="ecoc:C3026_11745"/>
<dbReference type="PATRIC" id="fig|1411691.4.peg.158"/>
<dbReference type="EchoBASE" id="EB2315"/>
<dbReference type="eggNOG" id="COG3775">
    <property type="taxonomic scope" value="Bacteria"/>
</dbReference>
<dbReference type="HOGENOM" id="CLU_040393_0_0_6"/>
<dbReference type="InParanoid" id="P69831"/>
<dbReference type="OMA" id="VFDMGWP"/>
<dbReference type="OrthoDB" id="9787936at2"/>
<dbReference type="PhylomeDB" id="P69831"/>
<dbReference type="BioCyc" id="MetaCyc:MONOMER-124142"/>
<dbReference type="BRENDA" id="2.7.1.200">
    <property type="organism ID" value="2026"/>
</dbReference>
<dbReference type="PRO" id="PR:P69831"/>
<dbReference type="Proteomes" id="UP000000625">
    <property type="component" value="Chromosome"/>
</dbReference>
<dbReference type="GO" id="GO:0005886">
    <property type="term" value="C:plasma membrane"/>
    <property type="evidence" value="ECO:0000314"/>
    <property type="project" value="EcoCyc"/>
</dbReference>
<dbReference type="GO" id="GO:1902495">
    <property type="term" value="C:transmembrane transporter complex"/>
    <property type="evidence" value="ECO:0000303"/>
    <property type="project" value="ComplexPortal"/>
</dbReference>
<dbReference type="GO" id="GO:0015577">
    <property type="term" value="F:galactitol transmembrane transporter activity"/>
    <property type="evidence" value="ECO:0007669"/>
    <property type="project" value="InterPro"/>
</dbReference>
<dbReference type="GO" id="GO:0090584">
    <property type="term" value="F:protein-phosphocysteine-galactitol-phosphotransferase system transporter activity"/>
    <property type="evidence" value="ECO:0000314"/>
    <property type="project" value="EcoCyc"/>
</dbReference>
<dbReference type="GO" id="GO:0019402">
    <property type="term" value="P:galactitol metabolic process"/>
    <property type="evidence" value="ECO:0007669"/>
    <property type="project" value="UniProtKB-KW"/>
</dbReference>
<dbReference type="GO" id="GO:0015796">
    <property type="term" value="P:galactitol transmembrane transport"/>
    <property type="evidence" value="ECO:0000314"/>
    <property type="project" value="EcoCyc"/>
</dbReference>
<dbReference type="GO" id="GO:0009401">
    <property type="term" value="P:phosphoenolpyruvate-dependent sugar phosphotransferase system"/>
    <property type="evidence" value="ECO:0000314"/>
    <property type="project" value="EcoCyc"/>
</dbReference>
<dbReference type="InterPro" id="IPR013853">
    <property type="entry name" value="EIIC-GAT"/>
</dbReference>
<dbReference type="InterPro" id="IPR013014">
    <property type="entry name" value="PTS_EIIC_2"/>
</dbReference>
<dbReference type="InterPro" id="IPR004703">
    <property type="entry name" value="PTS_sugar-sp_permease"/>
</dbReference>
<dbReference type="NCBIfam" id="TIGR00827">
    <property type="entry name" value="EIIC-GAT"/>
    <property type="match status" value="1"/>
</dbReference>
<dbReference type="PANTHER" id="PTHR37324">
    <property type="entry name" value="PTS SYSTEM GALACTITOL-SPECIFIC EIIC COMPONENT"/>
    <property type="match status" value="1"/>
</dbReference>
<dbReference type="PANTHER" id="PTHR37324:SF2">
    <property type="entry name" value="PTS SYSTEM GALACTITOL-SPECIFIC EIIC COMPONENT"/>
    <property type="match status" value="1"/>
</dbReference>
<dbReference type="Pfam" id="PF03611">
    <property type="entry name" value="EIIC-GAT"/>
    <property type="match status" value="1"/>
</dbReference>
<dbReference type="PIRSF" id="PIRSF006304">
    <property type="entry name" value="GatC"/>
    <property type="match status" value="1"/>
</dbReference>
<dbReference type="PROSITE" id="PS51104">
    <property type="entry name" value="PTS_EIIC_TYPE_2"/>
    <property type="match status" value="1"/>
</dbReference>
<organism>
    <name type="scientific">Escherichia coli (strain K12)</name>
    <dbReference type="NCBI Taxonomy" id="83333"/>
    <lineage>
        <taxon>Bacteria</taxon>
        <taxon>Pseudomonadati</taxon>
        <taxon>Pseudomonadota</taxon>
        <taxon>Gammaproteobacteria</taxon>
        <taxon>Enterobacterales</taxon>
        <taxon>Enterobacteriaceae</taxon>
        <taxon>Escherichia</taxon>
    </lineage>
</organism>
<evidence type="ECO:0000255" key="1">
    <source>
        <dbReference type="PROSITE-ProRule" id="PRU00427"/>
    </source>
</evidence>
<evidence type="ECO:0000269" key="2">
    <source>
    </source>
</evidence>
<evidence type="ECO:0000269" key="3">
    <source>
    </source>
</evidence>
<evidence type="ECO:0000269" key="4">
    <source>
    </source>
</evidence>
<evidence type="ECO:0000269" key="5">
    <source>
    </source>
</evidence>
<evidence type="ECO:0000303" key="6">
    <source>
    </source>
</evidence>
<evidence type="ECO:0000305" key="7"/>
<evidence type="ECO:0000305" key="8">
    <source>
    </source>
</evidence>
<proteinExistence type="evidence at protein level"/>
<reference key="1">
    <citation type="journal article" date="1995" name="Biochim. Biophys. Acta">
        <title>Sequence of the gat operon for galactitol utilization from a wild-type strain EC3132 of Escherichia coli.</title>
        <authorList>
            <person name="Nobelmann B."/>
            <person name="Lengeler J.W."/>
        </authorList>
    </citation>
    <scope>NUCLEOTIDE SEQUENCE [GENOMIC DNA]</scope>
    <source>
        <strain>EC3132</strain>
    </source>
</reference>
<reference key="2">
    <citation type="journal article" date="1996" name="DNA Res.">
        <title>A 460-kb DNA sequence of the Escherichia coli K-12 genome corresponding to the 40.1-50.0 min region on the linkage map.</title>
        <authorList>
            <person name="Itoh T."/>
            <person name="Aiba H."/>
            <person name="Baba T."/>
            <person name="Fujita K."/>
            <person name="Hayashi K."/>
            <person name="Inada T."/>
            <person name="Isono K."/>
            <person name="Kasai H."/>
            <person name="Kimura S."/>
            <person name="Kitakawa M."/>
            <person name="Kitagawa M."/>
            <person name="Makino K."/>
            <person name="Miki T."/>
            <person name="Mizobuchi K."/>
            <person name="Mori H."/>
            <person name="Mori T."/>
            <person name="Motomura K."/>
            <person name="Nakade S."/>
            <person name="Nakamura Y."/>
            <person name="Nashimoto H."/>
            <person name="Nishio Y."/>
            <person name="Oshima T."/>
            <person name="Saito N."/>
            <person name="Sampei G."/>
            <person name="Seki Y."/>
            <person name="Sivasundaram S."/>
            <person name="Tagami H."/>
            <person name="Takeda J."/>
            <person name="Takemoto K."/>
            <person name="Wada C."/>
            <person name="Yamamoto Y."/>
            <person name="Horiuchi T."/>
        </authorList>
    </citation>
    <scope>NUCLEOTIDE SEQUENCE [LARGE SCALE GENOMIC DNA]</scope>
    <source>
        <strain>K12 / W3110 / ATCC 27325 / DSM 5911</strain>
    </source>
</reference>
<reference key="3">
    <citation type="journal article" date="1997" name="Science">
        <title>The complete genome sequence of Escherichia coli K-12.</title>
        <authorList>
            <person name="Blattner F.R."/>
            <person name="Plunkett G. III"/>
            <person name="Bloch C.A."/>
            <person name="Perna N.T."/>
            <person name="Burland V."/>
            <person name="Riley M."/>
            <person name="Collado-Vides J."/>
            <person name="Glasner J.D."/>
            <person name="Rode C.K."/>
            <person name="Mayhew G.F."/>
            <person name="Gregor J."/>
            <person name="Davis N.W."/>
            <person name="Kirkpatrick H.A."/>
            <person name="Goeden M.A."/>
            <person name="Rose D.J."/>
            <person name="Mau B."/>
            <person name="Shao Y."/>
        </authorList>
    </citation>
    <scope>NUCLEOTIDE SEQUENCE [LARGE SCALE GENOMIC DNA]</scope>
    <source>
        <strain>K12 / MG1655 / ATCC 47076</strain>
    </source>
</reference>
<reference key="4">
    <citation type="journal article" date="2012" name="J. Bacteriol.">
        <title>Newly identified genetic variations in common Escherichia coli MG1655 stock cultures.</title>
        <authorList>
            <person name="Freddolino P.L."/>
            <person name="Amini S."/>
            <person name="Tavazoie S."/>
        </authorList>
    </citation>
    <scope>SEQUENCE REVISION</scope>
    <source>
        <strain>K12 / MG1655 / ATCC 700926</strain>
    </source>
</reference>
<reference key="5">
    <citation type="journal article" date="2006" name="Mol. Syst. Biol.">
        <title>Highly accurate genome sequences of Escherichia coli K-12 strains MG1655 and W3110.</title>
        <authorList>
            <person name="Hayashi K."/>
            <person name="Morooka N."/>
            <person name="Yamamoto Y."/>
            <person name="Fujita K."/>
            <person name="Isono K."/>
            <person name="Choi S."/>
            <person name="Ohtsubo E."/>
            <person name="Baba T."/>
            <person name="Wanner B.L."/>
            <person name="Mori H."/>
            <person name="Horiuchi T."/>
        </authorList>
    </citation>
    <scope>NUCLEOTIDE SEQUENCE [LARGE SCALE GENOMIC DNA]</scope>
    <source>
        <strain>K12 / W3110 / ATCC 27325 / DSM 5911</strain>
    </source>
</reference>
<reference key="6">
    <citation type="journal article" date="2005" name="J. Biol. Chem.">
        <title>Protein complexes of the Escherichia coli cell envelope.</title>
        <authorList>
            <person name="Stenberg F."/>
            <person name="Chovanec P."/>
            <person name="Maslen S.L."/>
            <person name="Robinson C.V."/>
            <person name="Ilag L."/>
            <person name="von Heijne G."/>
            <person name="Daley D.O."/>
        </authorList>
    </citation>
    <scope>SUBUNIT</scope>
    <scope>SUBCELLULAR LOCATION</scope>
    <source>
        <strain>BL21-DE3</strain>
    </source>
</reference>
<reference key="7">
    <citation type="journal article" date="2005" name="Science">
        <title>Global topology analysis of the Escherichia coli inner membrane proteome.</title>
        <authorList>
            <person name="Daley D.O."/>
            <person name="Rapp M."/>
            <person name="Granseth E."/>
            <person name="Melen K."/>
            <person name="Drew D."/>
            <person name="von Heijne G."/>
        </authorList>
    </citation>
    <scope>SUBCELLULAR LOCATION</scope>
    <source>
        <strain>K12 / MG1655 / ATCC 47076</strain>
    </source>
</reference>
<reference key="8">
    <citation type="journal article" date="1996" name="J. Bacteriol.">
        <title>Molecular analysis of the gat genes from Escherichia coli and of their roles in galactitol transport and metabolism.</title>
        <authorList>
            <person name="Nobelmann B."/>
            <person name="Lengeler J.W."/>
        </authorList>
    </citation>
    <scope>FUNCTION</scope>
    <scope>INDUCTION</scope>
</reference>
<reference key="9">
    <citation type="journal article" date="2015" name="Proteomics">
        <title>Proteome-wide analysis of the amino terminal status of Escherichia coli proteins at the steady-state and upon deformylation inhibition.</title>
        <authorList>
            <person name="Bienvenut W.V."/>
            <person name="Giglione C."/>
            <person name="Meinnel T."/>
        </authorList>
    </citation>
    <scope>FORMYLATION AT MET-1</scope>
    <source>
        <strain>K12 / CAG12184</strain>
    </source>
</reference>
<protein>
    <recommendedName>
        <fullName evidence="6">PTS system galactitol-specific EIIC component</fullName>
    </recommendedName>
    <alternativeName>
        <fullName evidence="6">EIIC-Gat</fullName>
    </alternativeName>
    <alternativeName>
        <fullName evidence="6">Galactitol permease IIC component</fullName>
    </alternativeName>
</protein>
<sequence length="451" mass="48365">MFSEVMRYILDLGPTVMLPIVIIIFSKILGMKAGDCFKAGLHIGIGFVGIGLVIGLMLDSIGPAAKAMAENFDLNLHVVDVGWPGSSPMTWASQIALVAIPIAILVNVAMLLTRMTRVVNVDIWNIWHMTFTGALLHLATGSWMIGMAGVVIHAAFVYKLGDWFARDTRNFFELEGIAIPHGTSAYMGPIAVLVDAIIEKIPGVNRIKFSADDIQRKFGPFGEPVTVGFVMGLIIGILAGYDVKGVLQLAVKTAAVMLLMPRVIKPIMDGLTPIAKQARSRLQAKFGGQEFLIGLDPALLLGHTAVVSASLIFIPLTILIAVCVPGNQVLPFGDLATIGFFVAMAVAVHRGNLFRTLISGVIIMSITLWIATQTIGLHTQLAANAGALKAGGMVASMDQGGSPITWLLIQVFSPQNIPGFIIIGAIYLTGIFMTWRRARGFIKQEKVVLAE</sequence>
<name>PTKC_ECOLI</name>